<sequence>MISSIIGIKFSACIEGCNASLYLRILSFSDIATDVVLFAVSNASIFKVLTMKVMNKIQNTFVDEIYRFTSMFTSFLFVLYKVLRLITISV</sequence>
<organism>
    <name type="scientific">Rickettsia prowazekii (strain Madrid E)</name>
    <dbReference type="NCBI Taxonomy" id="272947"/>
    <lineage>
        <taxon>Bacteria</taxon>
        <taxon>Pseudomonadati</taxon>
        <taxon>Pseudomonadota</taxon>
        <taxon>Alphaproteobacteria</taxon>
        <taxon>Rickettsiales</taxon>
        <taxon>Rickettsiaceae</taxon>
        <taxon>Rickettsieae</taxon>
        <taxon>Rickettsia</taxon>
        <taxon>typhus group</taxon>
    </lineage>
</organism>
<dbReference type="EMBL" id="AJ235272">
    <property type="protein sequence ID" value="CAA14999.1"/>
    <property type="molecule type" value="Genomic_DNA"/>
</dbReference>
<dbReference type="PIR" id="E71659">
    <property type="entry name" value="E71659"/>
</dbReference>
<dbReference type="EnsemblBacteria" id="CAA14999">
    <property type="protein sequence ID" value="CAA14999"/>
    <property type="gene ID" value="CAA14999"/>
</dbReference>
<dbReference type="KEGG" id="rpr:RP550"/>
<dbReference type="HOGENOM" id="CLU_2438877_0_0_5"/>
<dbReference type="Proteomes" id="UP000002480">
    <property type="component" value="Chromosome"/>
</dbReference>
<name>Y550_RICPR</name>
<gene>
    <name type="ordered locus">RP550</name>
</gene>
<proteinExistence type="predicted"/>
<accession>Q9ZD00</accession>
<reference key="1">
    <citation type="journal article" date="1998" name="Nature">
        <title>The genome sequence of Rickettsia prowazekii and the origin of mitochondria.</title>
        <authorList>
            <person name="Andersson S.G.E."/>
            <person name="Zomorodipour A."/>
            <person name="Andersson J.O."/>
            <person name="Sicheritz-Ponten T."/>
            <person name="Alsmark U.C.M."/>
            <person name="Podowski R.M."/>
            <person name="Naeslund A.K."/>
            <person name="Eriksson A.-S."/>
            <person name="Winkler H.H."/>
            <person name="Kurland C.G."/>
        </authorList>
    </citation>
    <scope>NUCLEOTIDE SEQUENCE [LARGE SCALE GENOMIC DNA]</scope>
    <source>
        <strain>Madrid E</strain>
    </source>
</reference>
<keyword id="KW-1185">Reference proteome</keyword>
<protein>
    <recommendedName>
        <fullName>Uncharacterized protein RP550</fullName>
    </recommendedName>
</protein>
<feature type="chain" id="PRO_0000101394" description="Uncharacterized protein RP550">
    <location>
        <begin position="1"/>
        <end position="90"/>
    </location>
</feature>